<gene>
    <name evidence="1" type="primary">gatA</name>
    <name type="ordered locus">Ppro_3088</name>
</gene>
<evidence type="ECO:0000255" key="1">
    <source>
        <dbReference type="HAMAP-Rule" id="MF_00120"/>
    </source>
</evidence>
<comment type="function">
    <text evidence="1">Allows the formation of correctly charged Gln-tRNA(Gln) through the transamidation of misacylated Glu-tRNA(Gln) in organisms which lack glutaminyl-tRNA synthetase. The reaction takes place in the presence of glutamine and ATP through an activated gamma-phospho-Glu-tRNA(Gln).</text>
</comment>
<comment type="catalytic activity">
    <reaction evidence="1">
        <text>L-glutamyl-tRNA(Gln) + L-glutamine + ATP + H2O = L-glutaminyl-tRNA(Gln) + L-glutamate + ADP + phosphate + H(+)</text>
        <dbReference type="Rhea" id="RHEA:17521"/>
        <dbReference type="Rhea" id="RHEA-COMP:9681"/>
        <dbReference type="Rhea" id="RHEA-COMP:9684"/>
        <dbReference type="ChEBI" id="CHEBI:15377"/>
        <dbReference type="ChEBI" id="CHEBI:15378"/>
        <dbReference type="ChEBI" id="CHEBI:29985"/>
        <dbReference type="ChEBI" id="CHEBI:30616"/>
        <dbReference type="ChEBI" id="CHEBI:43474"/>
        <dbReference type="ChEBI" id="CHEBI:58359"/>
        <dbReference type="ChEBI" id="CHEBI:78520"/>
        <dbReference type="ChEBI" id="CHEBI:78521"/>
        <dbReference type="ChEBI" id="CHEBI:456216"/>
        <dbReference type="EC" id="6.3.5.7"/>
    </reaction>
</comment>
<comment type="subunit">
    <text evidence="1">Heterotrimer of A, B and C subunits.</text>
</comment>
<comment type="similarity">
    <text evidence="1">Belongs to the amidase family. GatA subfamily.</text>
</comment>
<reference key="1">
    <citation type="submission" date="2006-10" db="EMBL/GenBank/DDBJ databases">
        <title>Complete sequence of chromosome of Pelobacter propionicus DSM 2379.</title>
        <authorList>
            <consortium name="US DOE Joint Genome Institute"/>
            <person name="Copeland A."/>
            <person name="Lucas S."/>
            <person name="Lapidus A."/>
            <person name="Barry K."/>
            <person name="Detter J.C."/>
            <person name="Glavina del Rio T."/>
            <person name="Hammon N."/>
            <person name="Israni S."/>
            <person name="Dalin E."/>
            <person name="Tice H."/>
            <person name="Pitluck S."/>
            <person name="Saunders E."/>
            <person name="Brettin T."/>
            <person name="Bruce D."/>
            <person name="Han C."/>
            <person name="Tapia R."/>
            <person name="Schmutz J."/>
            <person name="Larimer F."/>
            <person name="Land M."/>
            <person name="Hauser L."/>
            <person name="Kyrpides N."/>
            <person name="Kim E."/>
            <person name="Lovley D."/>
            <person name="Richardson P."/>
        </authorList>
    </citation>
    <scope>NUCLEOTIDE SEQUENCE [LARGE SCALE GENOMIC DNA]</scope>
    <source>
        <strain>DSM 2379 / NBRC 103807 / OttBd1</strain>
    </source>
</reference>
<sequence>MDLFDLTLHELHAKLKSKEVSSREATSAMLDRIAELEPRINAFITVTPERALAEAEAADRRIAAGEADVLTGIPLAVKDIFLTEGTLTTCGSRILNNFIPPYSATSFEKLKQRGMVLLGKLNQDEFAMGSSNESSASGPCRNPWNTDCIPGGSSGGSAAAIAARQATVTLGTDTGGSIRQPASHCGCVGLKPTYGRVSRYGVIAYASSLDQVGPLTRDVTDCAIMLGALAGHDPKDSTSVDRPVPDYQAALTNDIRGLRIGLPREYFIEGLDPDVQASMDQAIETYRRLGAEFTEISLPHTDYAVASYYLIATAEASANLARYDGVRFGHRAEQAEGLLEMYSRSRSQGFGSEVKRRIMLGTYALSSGYYDAYYLKAQKVRTLIMADFIQAFEGVDLILTPVAPTPAFRIGEKVNDPLQMYLSDIFTIPVNLAGTCAMSLPAGISGQGLPIGVQLIGKPFGEETILRAAHAFEQATEWHSLRAPL</sequence>
<keyword id="KW-0067">ATP-binding</keyword>
<keyword id="KW-0436">Ligase</keyword>
<keyword id="KW-0547">Nucleotide-binding</keyword>
<keyword id="KW-0648">Protein biosynthesis</keyword>
<keyword id="KW-1185">Reference proteome</keyword>
<name>GATA_PELPD</name>
<dbReference type="EC" id="6.3.5.7" evidence="1"/>
<dbReference type="EMBL" id="CP000482">
    <property type="protein sequence ID" value="ABL00684.1"/>
    <property type="molecule type" value="Genomic_DNA"/>
</dbReference>
<dbReference type="RefSeq" id="WP_011736916.1">
    <property type="nucleotide sequence ID" value="NC_008609.1"/>
</dbReference>
<dbReference type="SMR" id="A1ATL3"/>
<dbReference type="STRING" id="338966.Ppro_3088"/>
<dbReference type="KEGG" id="ppd:Ppro_3088"/>
<dbReference type="eggNOG" id="COG0154">
    <property type="taxonomic scope" value="Bacteria"/>
</dbReference>
<dbReference type="HOGENOM" id="CLU_009600_0_3_7"/>
<dbReference type="OrthoDB" id="9811471at2"/>
<dbReference type="Proteomes" id="UP000006732">
    <property type="component" value="Chromosome"/>
</dbReference>
<dbReference type="GO" id="GO:0030956">
    <property type="term" value="C:glutamyl-tRNA(Gln) amidotransferase complex"/>
    <property type="evidence" value="ECO:0007669"/>
    <property type="project" value="InterPro"/>
</dbReference>
<dbReference type="GO" id="GO:0005524">
    <property type="term" value="F:ATP binding"/>
    <property type="evidence" value="ECO:0007669"/>
    <property type="project" value="UniProtKB-KW"/>
</dbReference>
<dbReference type="GO" id="GO:0050567">
    <property type="term" value="F:glutaminyl-tRNA synthase (glutamine-hydrolyzing) activity"/>
    <property type="evidence" value="ECO:0007669"/>
    <property type="project" value="UniProtKB-UniRule"/>
</dbReference>
<dbReference type="GO" id="GO:0006412">
    <property type="term" value="P:translation"/>
    <property type="evidence" value="ECO:0007669"/>
    <property type="project" value="UniProtKB-UniRule"/>
</dbReference>
<dbReference type="Gene3D" id="3.90.1300.10">
    <property type="entry name" value="Amidase signature (AS) domain"/>
    <property type="match status" value="1"/>
</dbReference>
<dbReference type="HAMAP" id="MF_00120">
    <property type="entry name" value="GatA"/>
    <property type="match status" value="1"/>
</dbReference>
<dbReference type="InterPro" id="IPR000120">
    <property type="entry name" value="Amidase"/>
</dbReference>
<dbReference type="InterPro" id="IPR020556">
    <property type="entry name" value="Amidase_CS"/>
</dbReference>
<dbReference type="InterPro" id="IPR023631">
    <property type="entry name" value="Amidase_dom"/>
</dbReference>
<dbReference type="InterPro" id="IPR036928">
    <property type="entry name" value="AS_sf"/>
</dbReference>
<dbReference type="InterPro" id="IPR004412">
    <property type="entry name" value="GatA"/>
</dbReference>
<dbReference type="NCBIfam" id="TIGR00132">
    <property type="entry name" value="gatA"/>
    <property type="match status" value="1"/>
</dbReference>
<dbReference type="PANTHER" id="PTHR11895:SF151">
    <property type="entry name" value="GLUTAMYL-TRNA(GLN) AMIDOTRANSFERASE SUBUNIT A"/>
    <property type="match status" value="1"/>
</dbReference>
<dbReference type="PANTHER" id="PTHR11895">
    <property type="entry name" value="TRANSAMIDASE"/>
    <property type="match status" value="1"/>
</dbReference>
<dbReference type="Pfam" id="PF01425">
    <property type="entry name" value="Amidase"/>
    <property type="match status" value="1"/>
</dbReference>
<dbReference type="SUPFAM" id="SSF75304">
    <property type="entry name" value="Amidase signature (AS) enzymes"/>
    <property type="match status" value="1"/>
</dbReference>
<dbReference type="PROSITE" id="PS00571">
    <property type="entry name" value="AMIDASES"/>
    <property type="match status" value="1"/>
</dbReference>
<protein>
    <recommendedName>
        <fullName evidence="1">Glutamyl-tRNA(Gln) amidotransferase subunit A</fullName>
        <shortName evidence="1">Glu-ADT subunit A</shortName>
        <ecNumber evidence="1">6.3.5.7</ecNumber>
    </recommendedName>
</protein>
<feature type="chain" id="PRO_1000015879" description="Glutamyl-tRNA(Gln) amidotransferase subunit A">
    <location>
        <begin position="1"/>
        <end position="485"/>
    </location>
</feature>
<feature type="active site" description="Charge relay system" evidence="1">
    <location>
        <position position="78"/>
    </location>
</feature>
<feature type="active site" description="Charge relay system" evidence="1">
    <location>
        <position position="153"/>
    </location>
</feature>
<feature type="active site" description="Acyl-ester intermediate" evidence="1">
    <location>
        <position position="177"/>
    </location>
</feature>
<accession>A1ATL3</accession>
<organism>
    <name type="scientific">Pelobacter propionicus (strain DSM 2379 / NBRC 103807 / OttBd1)</name>
    <dbReference type="NCBI Taxonomy" id="338966"/>
    <lineage>
        <taxon>Bacteria</taxon>
        <taxon>Pseudomonadati</taxon>
        <taxon>Thermodesulfobacteriota</taxon>
        <taxon>Desulfuromonadia</taxon>
        <taxon>Desulfuromonadales</taxon>
        <taxon>Desulfuromonadaceae</taxon>
        <taxon>Pelobacter</taxon>
    </lineage>
</organism>
<proteinExistence type="inferred from homology"/>